<protein>
    <recommendedName>
        <fullName evidence="1">tRNA uridine 5-carboxymethylaminomethyl modification enzyme MnmG</fullName>
    </recommendedName>
    <alternativeName>
        <fullName evidence="1">Glucose-inhibited division protein A</fullName>
    </alternativeName>
</protein>
<comment type="function">
    <text evidence="1">NAD-binding protein involved in the addition of a carboxymethylaminomethyl (cmnm) group at the wobble position (U34) of certain tRNAs, forming tRNA-cmnm(5)s(2)U34.</text>
</comment>
<comment type="cofactor">
    <cofactor evidence="1">
        <name>FAD</name>
        <dbReference type="ChEBI" id="CHEBI:57692"/>
    </cofactor>
</comment>
<comment type="subunit">
    <text evidence="1">Homodimer. Heterotetramer of two MnmE and two MnmG subunits.</text>
</comment>
<comment type="subcellular location">
    <subcellularLocation>
        <location evidence="1">Cytoplasm</location>
    </subcellularLocation>
</comment>
<comment type="similarity">
    <text evidence="1">Belongs to the MnmG family.</text>
</comment>
<sequence length="629" mass="69521">MFYPDPFDVIIIGGGHAGTEAAMAAARMGQQTLLLTHNIDTLGQMSCNPAIGGIGKGHLVKEVDALGGLMAKAIDQAGIQFRILNASKGPAVRATRAQADRVLYRQAVRTALENQPNLMIFQQAVEDLIVENDRVVGAVTQMGLKFRAKAVVLTVGTFLDGKIHIGLDNYSGGRAGDPPSIPLSRRLRELPLRVGRLKTGTPPRIDARTIDFSVLAQQHGDNPMPVFSFMGNASQHPQQVPCYITHTNEKTHDVIRSNLDRSPMYAGVIEGVGPRYCPSIEDKVMRFADRNQHQIFLEPEGLTSNEIYPNGISTSLPFDVQMQIVRSMQGMENAKIVRPGYAIEYDFFDPRDLKPTLESKFIQGLFFAGQINGTTGYEEAAAQGLLAGLNAARLSADKEGWAPARSQAYLGVLVDDLCTLGTKEPYRMFTSRAEYRLMLREDNADLRLTEIGRELGLVDDERWARFNEKLENIERERQRLKSTWVTPSAEAAAEVNAHLTAPLSREASGEDLLRRPEMTYEKLTTLTPFAPALTDEQAAEQVEIQVKYEGYIARQQDEIEKQLRNENTLLPATLDYRQVSGLSNEVIAKLNDHKPASIGQASRISGVTPAAISILLVWLKKQGMLRRSA</sequence>
<dbReference type="EMBL" id="CU928164">
    <property type="protein sequence ID" value="CAR20451.1"/>
    <property type="molecule type" value="Genomic_DNA"/>
</dbReference>
<dbReference type="RefSeq" id="WP_000499788.1">
    <property type="nucleotide sequence ID" value="NC_011750.1"/>
</dbReference>
<dbReference type="RefSeq" id="YP_002410220.1">
    <property type="nucleotide sequence ID" value="NC_011750.1"/>
</dbReference>
<dbReference type="SMR" id="B7NR43"/>
<dbReference type="STRING" id="585057.ECIAI39_4345"/>
<dbReference type="GeneID" id="75205459"/>
<dbReference type="KEGG" id="ect:ECIAI39_4345"/>
<dbReference type="PATRIC" id="fig|585057.6.peg.4491"/>
<dbReference type="HOGENOM" id="CLU_007831_2_2_6"/>
<dbReference type="Proteomes" id="UP000000749">
    <property type="component" value="Chromosome"/>
</dbReference>
<dbReference type="GO" id="GO:0005829">
    <property type="term" value="C:cytosol"/>
    <property type="evidence" value="ECO:0007669"/>
    <property type="project" value="TreeGrafter"/>
</dbReference>
<dbReference type="GO" id="GO:0050660">
    <property type="term" value="F:flavin adenine dinucleotide binding"/>
    <property type="evidence" value="ECO:0007669"/>
    <property type="project" value="UniProtKB-UniRule"/>
</dbReference>
<dbReference type="GO" id="GO:0030488">
    <property type="term" value="P:tRNA methylation"/>
    <property type="evidence" value="ECO:0007669"/>
    <property type="project" value="TreeGrafter"/>
</dbReference>
<dbReference type="GO" id="GO:0002098">
    <property type="term" value="P:tRNA wobble uridine modification"/>
    <property type="evidence" value="ECO:0007669"/>
    <property type="project" value="InterPro"/>
</dbReference>
<dbReference type="FunFam" id="1.10.10.1800:FF:000001">
    <property type="entry name" value="tRNA uridine 5-carboxymethylaminomethyl modification enzyme MnmG"/>
    <property type="match status" value="1"/>
</dbReference>
<dbReference type="FunFam" id="1.10.150.570:FF:000001">
    <property type="entry name" value="tRNA uridine 5-carboxymethylaminomethyl modification enzyme MnmG"/>
    <property type="match status" value="1"/>
</dbReference>
<dbReference type="FunFam" id="3.50.50.60:FF:000002">
    <property type="entry name" value="tRNA uridine 5-carboxymethylaminomethyl modification enzyme MnmG"/>
    <property type="match status" value="1"/>
</dbReference>
<dbReference type="FunFam" id="3.50.50.60:FF:000010">
    <property type="entry name" value="tRNA uridine 5-carboxymethylaminomethyl modification enzyme MnmG"/>
    <property type="match status" value="1"/>
</dbReference>
<dbReference type="Gene3D" id="3.50.50.60">
    <property type="entry name" value="FAD/NAD(P)-binding domain"/>
    <property type="match status" value="2"/>
</dbReference>
<dbReference type="Gene3D" id="1.10.150.570">
    <property type="entry name" value="GidA associated domain, C-terminal subdomain"/>
    <property type="match status" value="1"/>
</dbReference>
<dbReference type="Gene3D" id="1.10.10.1800">
    <property type="entry name" value="tRNA uridine 5-carboxymethylaminomethyl modification enzyme MnmG/GidA"/>
    <property type="match status" value="1"/>
</dbReference>
<dbReference type="HAMAP" id="MF_00129">
    <property type="entry name" value="MnmG_GidA"/>
    <property type="match status" value="1"/>
</dbReference>
<dbReference type="InterPro" id="IPR036188">
    <property type="entry name" value="FAD/NAD-bd_sf"/>
</dbReference>
<dbReference type="InterPro" id="IPR049312">
    <property type="entry name" value="GIDA_C_N"/>
</dbReference>
<dbReference type="InterPro" id="IPR004416">
    <property type="entry name" value="MnmG"/>
</dbReference>
<dbReference type="InterPro" id="IPR002218">
    <property type="entry name" value="MnmG-rel"/>
</dbReference>
<dbReference type="InterPro" id="IPR020595">
    <property type="entry name" value="MnmG-rel_CS"/>
</dbReference>
<dbReference type="InterPro" id="IPR026904">
    <property type="entry name" value="MnmG_C"/>
</dbReference>
<dbReference type="InterPro" id="IPR047001">
    <property type="entry name" value="MnmG_C_subdom"/>
</dbReference>
<dbReference type="InterPro" id="IPR044920">
    <property type="entry name" value="MnmG_C_subdom_sf"/>
</dbReference>
<dbReference type="InterPro" id="IPR040131">
    <property type="entry name" value="MnmG_N"/>
</dbReference>
<dbReference type="NCBIfam" id="TIGR00136">
    <property type="entry name" value="mnmG_gidA"/>
    <property type="match status" value="1"/>
</dbReference>
<dbReference type="PANTHER" id="PTHR11806">
    <property type="entry name" value="GLUCOSE INHIBITED DIVISION PROTEIN A"/>
    <property type="match status" value="1"/>
</dbReference>
<dbReference type="PANTHER" id="PTHR11806:SF0">
    <property type="entry name" value="PROTEIN MTO1 HOMOLOG, MITOCHONDRIAL"/>
    <property type="match status" value="1"/>
</dbReference>
<dbReference type="Pfam" id="PF01134">
    <property type="entry name" value="GIDA"/>
    <property type="match status" value="1"/>
</dbReference>
<dbReference type="Pfam" id="PF21680">
    <property type="entry name" value="GIDA_C_1st"/>
    <property type="match status" value="1"/>
</dbReference>
<dbReference type="Pfam" id="PF13932">
    <property type="entry name" value="SAM_GIDA_C"/>
    <property type="match status" value="1"/>
</dbReference>
<dbReference type="SMART" id="SM01228">
    <property type="entry name" value="GIDA_assoc_3"/>
    <property type="match status" value="1"/>
</dbReference>
<dbReference type="SUPFAM" id="SSF51905">
    <property type="entry name" value="FAD/NAD(P)-binding domain"/>
    <property type="match status" value="1"/>
</dbReference>
<dbReference type="PROSITE" id="PS01280">
    <property type="entry name" value="GIDA_1"/>
    <property type="match status" value="1"/>
</dbReference>
<dbReference type="PROSITE" id="PS01281">
    <property type="entry name" value="GIDA_2"/>
    <property type="match status" value="1"/>
</dbReference>
<feature type="chain" id="PRO_1000117717" description="tRNA uridine 5-carboxymethylaminomethyl modification enzyme MnmG">
    <location>
        <begin position="1"/>
        <end position="629"/>
    </location>
</feature>
<feature type="binding site" evidence="1">
    <location>
        <begin position="13"/>
        <end position="18"/>
    </location>
    <ligand>
        <name>FAD</name>
        <dbReference type="ChEBI" id="CHEBI:57692"/>
    </ligand>
</feature>
<feature type="binding site" evidence="1">
    <location>
        <position position="125"/>
    </location>
    <ligand>
        <name>FAD</name>
        <dbReference type="ChEBI" id="CHEBI:57692"/>
    </ligand>
</feature>
<feature type="binding site" evidence="1">
    <location>
        <position position="180"/>
    </location>
    <ligand>
        <name>FAD</name>
        <dbReference type="ChEBI" id="CHEBI:57692"/>
    </ligand>
</feature>
<feature type="binding site" evidence="1">
    <location>
        <begin position="273"/>
        <end position="287"/>
    </location>
    <ligand>
        <name>NAD(+)</name>
        <dbReference type="ChEBI" id="CHEBI:57540"/>
    </ligand>
</feature>
<feature type="binding site" evidence="1">
    <location>
        <position position="370"/>
    </location>
    <ligand>
        <name>FAD</name>
        <dbReference type="ChEBI" id="CHEBI:57692"/>
    </ligand>
</feature>
<keyword id="KW-0963">Cytoplasm</keyword>
<keyword id="KW-0274">FAD</keyword>
<keyword id="KW-0285">Flavoprotein</keyword>
<keyword id="KW-0520">NAD</keyword>
<keyword id="KW-0819">tRNA processing</keyword>
<organism>
    <name type="scientific">Escherichia coli O7:K1 (strain IAI39 / ExPEC)</name>
    <dbReference type="NCBI Taxonomy" id="585057"/>
    <lineage>
        <taxon>Bacteria</taxon>
        <taxon>Pseudomonadati</taxon>
        <taxon>Pseudomonadota</taxon>
        <taxon>Gammaproteobacteria</taxon>
        <taxon>Enterobacterales</taxon>
        <taxon>Enterobacteriaceae</taxon>
        <taxon>Escherichia</taxon>
    </lineage>
</organism>
<name>MNMG_ECO7I</name>
<gene>
    <name evidence="1" type="primary">mnmG</name>
    <name evidence="1" type="synonym">gidA</name>
    <name type="ordered locus">ECIAI39_4345</name>
</gene>
<proteinExistence type="inferred from homology"/>
<evidence type="ECO:0000255" key="1">
    <source>
        <dbReference type="HAMAP-Rule" id="MF_00129"/>
    </source>
</evidence>
<reference key="1">
    <citation type="journal article" date="2009" name="PLoS Genet.">
        <title>Organised genome dynamics in the Escherichia coli species results in highly diverse adaptive paths.</title>
        <authorList>
            <person name="Touchon M."/>
            <person name="Hoede C."/>
            <person name="Tenaillon O."/>
            <person name="Barbe V."/>
            <person name="Baeriswyl S."/>
            <person name="Bidet P."/>
            <person name="Bingen E."/>
            <person name="Bonacorsi S."/>
            <person name="Bouchier C."/>
            <person name="Bouvet O."/>
            <person name="Calteau A."/>
            <person name="Chiapello H."/>
            <person name="Clermont O."/>
            <person name="Cruveiller S."/>
            <person name="Danchin A."/>
            <person name="Diard M."/>
            <person name="Dossat C."/>
            <person name="Karoui M.E."/>
            <person name="Frapy E."/>
            <person name="Garry L."/>
            <person name="Ghigo J.M."/>
            <person name="Gilles A.M."/>
            <person name="Johnson J."/>
            <person name="Le Bouguenec C."/>
            <person name="Lescat M."/>
            <person name="Mangenot S."/>
            <person name="Martinez-Jehanne V."/>
            <person name="Matic I."/>
            <person name="Nassif X."/>
            <person name="Oztas S."/>
            <person name="Petit M.A."/>
            <person name="Pichon C."/>
            <person name="Rouy Z."/>
            <person name="Ruf C.S."/>
            <person name="Schneider D."/>
            <person name="Tourret J."/>
            <person name="Vacherie B."/>
            <person name="Vallenet D."/>
            <person name="Medigue C."/>
            <person name="Rocha E.P.C."/>
            <person name="Denamur E."/>
        </authorList>
    </citation>
    <scope>NUCLEOTIDE SEQUENCE [LARGE SCALE GENOMIC DNA]</scope>
    <source>
        <strain>IAI39 / ExPEC</strain>
    </source>
</reference>
<accession>B7NR43</accession>